<organism>
    <name type="scientific">Xenopus laevis</name>
    <name type="common">African clawed frog</name>
    <dbReference type="NCBI Taxonomy" id="8355"/>
    <lineage>
        <taxon>Eukaryota</taxon>
        <taxon>Metazoa</taxon>
        <taxon>Chordata</taxon>
        <taxon>Craniata</taxon>
        <taxon>Vertebrata</taxon>
        <taxon>Euteleostomi</taxon>
        <taxon>Amphibia</taxon>
        <taxon>Batrachia</taxon>
        <taxon>Anura</taxon>
        <taxon>Pipoidea</taxon>
        <taxon>Pipidae</taxon>
        <taxon>Xenopodinae</taxon>
        <taxon>Xenopus</taxon>
        <taxon>Xenopus</taxon>
    </lineage>
</organism>
<keyword id="KW-0040">ANK repeat</keyword>
<keyword id="KW-0963">Cytoplasm</keyword>
<keyword id="KW-0446">Lipid-binding</keyword>
<keyword id="KW-0539">Nucleus</keyword>
<keyword id="KW-1185">Reference proteome</keyword>
<keyword id="KW-0677">Repeat</keyword>
<proteinExistence type="evidence at transcript level"/>
<protein>
    <recommendedName>
        <fullName>Acyl-CoA-binding domain-containing protein 6</fullName>
    </recommendedName>
</protein>
<comment type="function">
    <text evidence="2">Binds long-chain acyl-coenzyme A molecules with a strong preference for unsaturated C18:1-CoA. Does not bind fatty acids (By similarity). Plays a role in protein N-myristoylation (By similarity).</text>
</comment>
<comment type="subcellular location">
    <subcellularLocation>
        <location evidence="2">Cytoplasm</location>
    </subcellularLocation>
    <subcellularLocation>
        <location evidence="2">Nucleus</location>
    </subcellularLocation>
</comment>
<gene>
    <name type="primary">acbd6</name>
</gene>
<reference key="1">
    <citation type="submission" date="2005-06" db="EMBL/GenBank/DDBJ databases">
        <authorList>
            <consortium name="NIH - Xenopus Gene Collection (XGC) project"/>
        </authorList>
    </citation>
    <scope>NUCLEOTIDE SEQUENCE [LARGE SCALE MRNA]</scope>
    <source>
        <tissue>Ovary</tissue>
    </source>
</reference>
<feature type="chain" id="PRO_0000232883" description="Acyl-CoA-binding domain-containing protein 6">
    <location>
        <begin position="1"/>
        <end position="286"/>
    </location>
</feature>
<feature type="domain" description="ACB" evidence="3">
    <location>
        <begin position="32"/>
        <end position="117"/>
    </location>
</feature>
<feature type="repeat" description="ANK 1">
    <location>
        <begin position="182"/>
        <end position="211"/>
    </location>
</feature>
<feature type="repeat" description="ANK 2">
    <location>
        <begin position="215"/>
        <end position="244"/>
    </location>
</feature>
<feature type="binding site" evidence="1">
    <location>
        <begin position="59"/>
        <end position="63"/>
    </location>
    <ligand>
        <name>an acyl-CoA</name>
        <dbReference type="ChEBI" id="CHEBI:58342"/>
    </ligand>
</feature>
<feature type="binding site" evidence="1">
    <location>
        <position position="85"/>
    </location>
    <ligand>
        <name>an acyl-CoA</name>
        <dbReference type="ChEBI" id="CHEBI:58342"/>
    </ligand>
</feature>
<feature type="binding site" evidence="1">
    <location>
        <position position="104"/>
    </location>
    <ligand>
        <name>an acyl-CoA</name>
        <dbReference type="ChEBI" id="CHEBI:58342"/>
    </ligand>
</feature>
<dbReference type="EMBL" id="BC097519">
    <property type="protein sequence ID" value="AAH97519.1"/>
    <property type="molecule type" value="mRNA"/>
</dbReference>
<dbReference type="RefSeq" id="NP_001089443.1">
    <property type="nucleotide sequence ID" value="NM_001095974.1"/>
</dbReference>
<dbReference type="SMR" id="Q4V869"/>
<dbReference type="DNASU" id="734493"/>
<dbReference type="GeneID" id="734493"/>
<dbReference type="KEGG" id="xla:734493"/>
<dbReference type="AGR" id="Xenbase:XB-GENE-989240"/>
<dbReference type="CTD" id="734493"/>
<dbReference type="Xenbase" id="XB-GENE-989240">
    <property type="gene designation" value="acbd6.S"/>
</dbReference>
<dbReference type="OMA" id="ARSKWQA"/>
<dbReference type="OrthoDB" id="10254927at2759"/>
<dbReference type="Proteomes" id="UP000186698">
    <property type="component" value="Chromosome 4S"/>
</dbReference>
<dbReference type="Bgee" id="734493">
    <property type="expression patterns" value="Expressed in egg cell and 19 other cell types or tissues"/>
</dbReference>
<dbReference type="GO" id="GO:0005737">
    <property type="term" value="C:cytoplasm"/>
    <property type="evidence" value="ECO:0000250"/>
    <property type="project" value="UniProtKB"/>
</dbReference>
<dbReference type="GO" id="GO:0005634">
    <property type="term" value="C:nucleus"/>
    <property type="evidence" value="ECO:0000250"/>
    <property type="project" value="UniProtKB"/>
</dbReference>
<dbReference type="GO" id="GO:0000062">
    <property type="term" value="F:fatty-acyl-CoA binding"/>
    <property type="evidence" value="ECO:0000250"/>
    <property type="project" value="UniProtKB"/>
</dbReference>
<dbReference type="GO" id="GO:0008289">
    <property type="term" value="F:lipid binding"/>
    <property type="evidence" value="ECO:0000250"/>
    <property type="project" value="UniProtKB"/>
</dbReference>
<dbReference type="FunFam" id="1.20.80.10:FF:000022">
    <property type="entry name" value="acyl-CoA-binding domain-containing protein 6 isoform X1"/>
    <property type="match status" value="1"/>
</dbReference>
<dbReference type="Gene3D" id="1.20.80.10">
    <property type="match status" value="1"/>
</dbReference>
<dbReference type="Gene3D" id="1.25.40.20">
    <property type="entry name" value="Ankyrin repeat-containing domain"/>
    <property type="match status" value="1"/>
</dbReference>
<dbReference type="InterPro" id="IPR000582">
    <property type="entry name" value="Acyl-CoA-binding_protein"/>
</dbReference>
<dbReference type="InterPro" id="IPR035984">
    <property type="entry name" value="Acyl-CoA-binding_sf"/>
</dbReference>
<dbReference type="InterPro" id="IPR002110">
    <property type="entry name" value="Ankyrin_rpt"/>
</dbReference>
<dbReference type="InterPro" id="IPR036770">
    <property type="entry name" value="Ankyrin_rpt-contain_sf"/>
</dbReference>
<dbReference type="InterPro" id="IPR014352">
    <property type="entry name" value="FERM/acyl-CoA-bd_prot_sf"/>
</dbReference>
<dbReference type="PANTHER" id="PTHR24119">
    <property type="entry name" value="ACYL-COA-BINDING DOMAIN-CONTAINING PROTEIN 6"/>
    <property type="match status" value="1"/>
</dbReference>
<dbReference type="PANTHER" id="PTHR24119:SF0">
    <property type="entry name" value="ACYL-COA-BINDING DOMAIN-CONTAINING PROTEIN 6"/>
    <property type="match status" value="1"/>
</dbReference>
<dbReference type="Pfam" id="PF00887">
    <property type="entry name" value="ACBP"/>
    <property type="match status" value="1"/>
</dbReference>
<dbReference type="Pfam" id="PF12796">
    <property type="entry name" value="Ank_2"/>
    <property type="match status" value="1"/>
</dbReference>
<dbReference type="PRINTS" id="PR00689">
    <property type="entry name" value="ACOABINDINGP"/>
</dbReference>
<dbReference type="PRINTS" id="PR01415">
    <property type="entry name" value="ANKYRIN"/>
</dbReference>
<dbReference type="SMART" id="SM00248">
    <property type="entry name" value="ANK"/>
    <property type="match status" value="2"/>
</dbReference>
<dbReference type="SUPFAM" id="SSF47027">
    <property type="entry name" value="Acyl-CoA binding protein"/>
    <property type="match status" value="1"/>
</dbReference>
<dbReference type="SUPFAM" id="SSF48403">
    <property type="entry name" value="Ankyrin repeat"/>
    <property type="match status" value="1"/>
</dbReference>
<dbReference type="PROSITE" id="PS51228">
    <property type="entry name" value="ACB_2"/>
    <property type="match status" value="1"/>
</dbReference>
<dbReference type="PROSITE" id="PS50297">
    <property type="entry name" value="ANK_REP_REGION"/>
    <property type="match status" value="1"/>
</dbReference>
<dbReference type="PROSITE" id="PS50088">
    <property type="entry name" value="ANK_REPEAT"/>
    <property type="match status" value="2"/>
</dbReference>
<sequence>MASPGILEESSSGDVCSGGCPDQWEEKTEEELQCQFEQAAKHVQNVASVASTEQLLYLYARYKQVKVGRCNTPKPGFFDYEGKKKWEAWKALGDYSHQQAMTEYIETVKKLDPDWSPQALEEPYKEPKTTFGGPVVSCLYKVQETLREEDKDIFDYCRENNHSRVSHALSTGSVDVNVADDEGRSLLHWACDRGHTQLVSVILFHNAHINMQDSEGQTPLHYASACEFPDIVDLLLDHGADPSLVDNDGFQPHEVTDSKTIAAMLQQHASNGEHNKPPSLLLEMPQ</sequence>
<name>ACBD6_XENLA</name>
<evidence type="ECO:0000250" key="1"/>
<evidence type="ECO:0000250" key="2">
    <source>
        <dbReference type="UniProtKB" id="Q9BR61"/>
    </source>
</evidence>
<evidence type="ECO:0000255" key="3">
    <source>
        <dbReference type="PROSITE-ProRule" id="PRU00573"/>
    </source>
</evidence>
<accession>Q4V869</accession>